<name>SPI1_VAR67</name>
<protein>
    <recommendedName>
        <fullName>Serine proteinase inhibitor 1</fullName>
        <shortName>Serp-1</shortName>
        <shortName>Serpin-1</shortName>
    </recommendedName>
</protein>
<dbReference type="EMBL" id="X69198">
    <property type="protein sequence ID" value="CAA49134.1"/>
    <property type="molecule type" value="Genomic_DNA"/>
</dbReference>
<dbReference type="EMBL" id="X67117">
    <property type="protein sequence ID" value="CAA47534.1"/>
    <property type="molecule type" value="Genomic_DNA"/>
</dbReference>
<dbReference type="PIR" id="G36857">
    <property type="entry name" value="G36857"/>
</dbReference>
<dbReference type="RefSeq" id="NP_042237.1">
    <property type="nucleotide sequence ID" value="NC_001611.1"/>
</dbReference>
<dbReference type="SMR" id="P0DOT3"/>
<dbReference type="GeneID" id="1486556"/>
<dbReference type="KEGG" id="vg:1486556"/>
<dbReference type="Proteomes" id="UP000002060">
    <property type="component" value="Segment"/>
</dbReference>
<dbReference type="GO" id="GO:0005615">
    <property type="term" value="C:extracellular space"/>
    <property type="evidence" value="ECO:0007669"/>
    <property type="project" value="InterPro"/>
</dbReference>
<dbReference type="GO" id="GO:0030430">
    <property type="term" value="C:host cell cytoplasm"/>
    <property type="evidence" value="ECO:0007669"/>
    <property type="project" value="UniProtKB-SubCell"/>
</dbReference>
<dbReference type="GO" id="GO:0004867">
    <property type="term" value="F:serine-type endopeptidase inhibitor activity"/>
    <property type="evidence" value="ECO:0007669"/>
    <property type="project" value="UniProtKB-KW"/>
</dbReference>
<dbReference type="CDD" id="cd19583">
    <property type="entry name" value="serpinN_SPI-1_SPI-2"/>
    <property type="match status" value="1"/>
</dbReference>
<dbReference type="Gene3D" id="2.30.39.10">
    <property type="entry name" value="Alpha-1-antitrypsin, domain 1"/>
    <property type="match status" value="1"/>
</dbReference>
<dbReference type="Gene3D" id="3.30.497.10">
    <property type="entry name" value="Antithrombin, subunit I, domain 2"/>
    <property type="match status" value="1"/>
</dbReference>
<dbReference type="InterPro" id="IPR023795">
    <property type="entry name" value="Serpin_CS"/>
</dbReference>
<dbReference type="InterPro" id="IPR023796">
    <property type="entry name" value="Serpin_dom"/>
</dbReference>
<dbReference type="InterPro" id="IPR000215">
    <property type="entry name" value="Serpin_fam"/>
</dbReference>
<dbReference type="InterPro" id="IPR036186">
    <property type="entry name" value="Serpin_sf"/>
</dbReference>
<dbReference type="InterPro" id="IPR042178">
    <property type="entry name" value="Serpin_sf_1"/>
</dbReference>
<dbReference type="InterPro" id="IPR042185">
    <property type="entry name" value="Serpin_sf_2"/>
</dbReference>
<dbReference type="PANTHER" id="PTHR11461:SF211">
    <property type="entry name" value="GH10112P-RELATED"/>
    <property type="match status" value="1"/>
</dbReference>
<dbReference type="PANTHER" id="PTHR11461">
    <property type="entry name" value="SERINE PROTEASE INHIBITOR, SERPIN"/>
    <property type="match status" value="1"/>
</dbReference>
<dbReference type="Pfam" id="PF00079">
    <property type="entry name" value="Serpin"/>
    <property type="match status" value="1"/>
</dbReference>
<dbReference type="SMART" id="SM00093">
    <property type="entry name" value="SERPIN"/>
    <property type="match status" value="1"/>
</dbReference>
<dbReference type="SUPFAM" id="SSF56574">
    <property type="entry name" value="Serpins"/>
    <property type="match status" value="1"/>
</dbReference>
<dbReference type="PROSITE" id="PS00284">
    <property type="entry name" value="SERPIN"/>
    <property type="match status" value="1"/>
</dbReference>
<reference key="1">
    <citation type="journal article" date="1993" name="FEBS Lett.">
        <title>Genes of variola and vaccinia viruses necessary to overcome the host protective mechanisms.</title>
        <authorList>
            <person name="Shchelkunov S.N."/>
            <person name="Blinov V.M."/>
            <person name="Sandakhchiev L.S."/>
        </authorList>
    </citation>
    <scope>NUCLEOTIDE SEQUENCE [GENOMIC DNA]</scope>
</reference>
<gene>
    <name type="primary">OPG208</name>
    <name type="synonym">SPI-1</name>
    <name type="ORF">B25R</name>
    <name type="ORF">C12L</name>
</gene>
<comment type="function">
    <text evidence="2">Plays a role in mediating viral host range. May act to inhibit a caspase independent form of apoptosis to allow efficient virus replication in infected cells.</text>
</comment>
<comment type="subcellular location">
    <subcellularLocation>
        <location evidence="2">Host cytoplasm</location>
    </subcellularLocation>
</comment>
<comment type="similarity">
    <text evidence="3">Belongs to the serpin family. Poxviruses subfamily.</text>
</comment>
<accession>P0DOT3</accession>
<accession>P33829</accession>
<proteinExistence type="inferred from homology"/>
<sequence>MIYIIYRYRYCLVYTMDIFKELILKYPDENVLISPVSILSTLSILNHGAAGSTAEQLSKYIENVNENTPDDKKDDNNDMDVDVPYCATLAIANKIYCSDSIEFHASFLQKIKDDFQTVNFNNANQTKELINEWVKTMTNGKINSLLTSPLPINTRMTVVSAVHFKAMWKYPFSKHLTYTDKFYISKNIVTSVDMMVSTENDLQYVHINELFGGFSIIDIPYEGNSSMVIILPDDIEGLYNIEKHITEENFKKWCGKLYTKSIDLYMPKFKLKMTESYNLVPILENLGLTNIFGYYADFSKMCNETITVEKFLHKTFIDVNEEYTEASAITGVFMTNFSMVYRTKVYINHPFIYMIKDNTGRILFIGKYCYPQ</sequence>
<organismHost>
    <name type="scientific">Homo sapiens</name>
    <name type="common">Human</name>
    <dbReference type="NCBI Taxonomy" id="9606"/>
</organismHost>
<evidence type="ECO:0000250" key="1"/>
<evidence type="ECO:0000250" key="2">
    <source>
        <dbReference type="UniProtKB" id="P15058"/>
    </source>
</evidence>
<evidence type="ECO:0000305" key="3"/>
<keyword id="KW-0244">Early protein</keyword>
<keyword id="KW-1035">Host cytoplasm</keyword>
<keyword id="KW-0646">Protease inhibitor</keyword>
<keyword id="KW-1185">Reference proteome</keyword>
<keyword id="KW-0722">Serine protease inhibitor</keyword>
<organism>
    <name type="scientific">Variola virus (isolate Human/India/Ind3/1967)</name>
    <name type="common">VARV</name>
    <name type="synonym">Smallpox virus</name>
    <dbReference type="NCBI Taxonomy" id="587200"/>
    <lineage>
        <taxon>Viruses</taxon>
        <taxon>Varidnaviria</taxon>
        <taxon>Bamfordvirae</taxon>
        <taxon>Nucleocytoviricota</taxon>
        <taxon>Pokkesviricetes</taxon>
        <taxon>Chitovirales</taxon>
        <taxon>Poxviridae</taxon>
        <taxon>Chordopoxvirinae</taxon>
        <taxon>Orthopoxvirus</taxon>
        <taxon>Variola virus</taxon>
    </lineage>
</organism>
<feature type="chain" id="PRO_0000094137" description="Serine proteinase inhibitor 1">
    <location>
        <begin position="1"/>
        <end position="372"/>
    </location>
</feature>
<feature type="site" description="Reactive bond" evidence="1">
    <location>
        <begin position="337"/>
        <end position="338"/>
    </location>
</feature>